<evidence type="ECO:0000255" key="1">
    <source>
        <dbReference type="PROSITE-ProRule" id="PRU00146"/>
    </source>
</evidence>
<evidence type="ECO:0000255" key="2">
    <source>
        <dbReference type="PROSITE-ProRule" id="PRU00548"/>
    </source>
</evidence>
<evidence type="ECO:0000256" key="3">
    <source>
        <dbReference type="SAM" id="MobiDB-lite"/>
    </source>
</evidence>
<evidence type="ECO:0000269" key="4">
    <source>
    </source>
</evidence>
<evidence type="ECO:0000269" key="5">
    <source>
    </source>
</evidence>
<evidence type="ECO:0000269" key="6">
    <source>
    </source>
</evidence>
<evidence type="ECO:0000269" key="7">
    <source>
    </source>
</evidence>
<evidence type="ECO:0000269" key="8">
    <source>
    </source>
</evidence>
<evidence type="ECO:0000269" key="9">
    <source>
    </source>
</evidence>
<evidence type="ECO:0000269" key="10">
    <source>
    </source>
</evidence>
<evidence type="ECO:0000269" key="11">
    <source>
    </source>
</evidence>
<evidence type="ECO:0000269" key="12">
    <source>
    </source>
</evidence>
<evidence type="ECO:0000269" key="13">
    <source>
    </source>
</evidence>
<evidence type="ECO:0000269" key="14">
    <source>
    </source>
</evidence>
<evidence type="ECO:0000269" key="15">
    <source>
    </source>
</evidence>
<evidence type="ECO:0000303" key="16">
    <source>
    </source>
</evidence>
<evidence type="ECO:0000303" key="17">
    <source ref="5"/>
</evidence>
<evidence type="ECO:0000305" key="18"/>
<evidence type="ECO:0000312" key="19">
    <source>
        <dbReference type="EMBL" id="AAC47328.2"/>
    </source>
</evidence>
<evidence type="ECO:0000312" key="20">
    <source>
        <dbReference type="EMBL" id="AAK93227.1"/>
    </source>
</evidence>
<evidence type="ECO:0000312" key="21">
    <source>
        <dbReference type="EMBL" id="AAO41602.1"/>
    </source>
</evidence>
<evidence type="ECO:0000312" key="22">
    <source>
        <dbReference type="EMBL" id="AAR96120.1"/>
    </source>
</evidence>
<evidence type="ECO:0000312" key="23">
    <source>
        <dbReference type="FlyBase" id="FBgn0000139"/>
    </source>
</evidence>
<dbReference type="EMBL" id="U73809">
    <property type="protein sequence ID" value="AAC47328.2"/>
    <property type="molecule type" value="mRNA"/>
</dbReference>
<dbReference type="EMBL" id="AE014297">
    <property type="protein sequence ID" value="AAN14010.1"/>
    <property type="molecule type" value="Genomic_DNA"/>
</dbReference>
<dbReference type="EMBL" id="AE014297">
    <property type="protein sequence ID" value="AAO41602.1"/>
    <property type="molecule type" value="Genomic_DNA"/>
</dbReference>
<dbReference type="EMBL" id="AY051803">
    <property type="protein sequence ID" value="AAK93227.1"/>
    <property type="molecule type" value="mRNA"/>
</dbReference>
<dbReference type="EMBL" id="BT011328">
    <property type="protein sequence ID" value="AAR96120.1"/>
    <property type="molecule type" value="mRNA"/>
</dbReference>
<dbReference type="EMBL" id="BT120264">
    <property type="protein sequence ID" value="ADC27634.1"/>
    <property type="status" value="ALT_SEQ"/>
    <property type="molecule type" value="mRNA"/>
</dbReference>
<dbReference type="PIR" id="S72249">
    <property type="entry name" value="S72249"/>
</dbReference>
<dbReference type="RefSeq" id="NP_733024.1">
    <molecule id="Q94545-2"/>
    <property type="nucleotide sequence ID" value="NM_170160.2"/>
</dbReference>
<dbReference type="RefSeq" id="NP_788735.1">
    <molecule id="Q94545-1"/>
    <property type="nucleotide sequence ID" value="NM_176558.3"/>
</dbReference>
<dbReference type="SMR" id="Q94545"/>
<dbReference type="BioGRID" id="67862">
    <property type="interactions" value="32"/>
</dbReference>
<dbReference type="ComplexPortal" id="CPX-2284">
    <property type="entry name" value="Histone-lysine N-methyltransferase/demethylase TRR complex"/>
</dbReference>
<dbReference type="ComplexPortal" id="CPX-2287">
    <property type="entry name" value="Histone-lysine N-methyltransferase TRX complex"/>
</dbReference>
<dbReference type="ComplexPortal" id="CPX-2798">
    <property type="entry name" value="COMPASS complex"/>
</dbReference>
<dbReference type="FunCoup" id="Q94545">
    <property type="interactions" value="2081"/>
</dbReference>
<dbReference type="IntAct" id="Q94545">
    <property type="interactions" value="11"/>
</dbReference>
<dbReference type="MINT" id="Q94545"/>
<dbReference type="STRING" id="7227.FBpp0084040"/>
<dbReference type="PaxDb" id="7227-FBpp0084040"/>
<dbReference type="DNASU" id="42936"/>
<dbReference type="EnsemblMetazoa" id="FBtr0084659">
    <molecule id="Q94545-2"/>
    <property type="protein sequence ID" value="FBpp0084039"/>
    <property type="gene ID" value="FBgn0000139"/>
</dbReference>
<dbReference type="EnsemblMetazoa" id="FBtr0084660">
    <molecule id="Q94545-1"/>
    <property type="protein sequence ID" value="FBpp0084040"/>
    <property type="gene ID" value="FBgn0000139"/>
</dbReference>
<dbReference type="GeneID" id="42936"/>
<dbReference type="KEGG" id="dme:Dmel_CG6677"/>
<dbReference type="UCSC" id="CG6677-RB">
    <property type="organism name" value="d. melanogaster"/>
</dbReference>
<dbReference type="UCSC" id="CG6677-RC">
    <molecule id="Q94545-1"/>
    <property type="organism name" value="d. melanogaster"/>
</dbReference>
<dbReference type="AGR" id="FB:FBgn0000139"/>
<dbReference type="CTD" id="42936"/>
<dbReference type="FlyBase" id="FBgn0000139">
    <property type="gene designation" value="ash2"/>
</dbReference>
<dbReference type="VEuPathDB" id="VectorBase:FBgn0000139"/>
<dbReference type="eggNOG" id="KOG2626">
    <property type="taxonomic scope" value="Eukaryota"/>
</dbReference>
<dbReference type="GeneTree" id="ENSGT00390000010474"/>
<dbReference type="HOGENOM" id="CLU_032370_2_0_1"/>
<dbReference type="InParanoid" id="Q94545"/>
<dbReference type="OMA" id="CATCSRW"/>
<dbReference type="OrthoDB" id="10266026at2759"/>
<dbReference type="PhylomeDB" id="Q94545"/>
<dbReference type="Reactome" id="R-DME-201722">
    <property type="pathway name" value="Formation of the beta-catenin:TCF transactivating complex"/>
</dbReference>
<dbReference type="Reactome" id="R-DME-8936459">
    <property type="pathway name" value="RUNX1 regulates genes involved in megakaryocyte differentiation and platelet function"/>
</dbReference>
<dbReference type="Reactome" id="R-DME-9772755">
    <property type="pathway name" value="Formation of WDR5-containing histone-modifying complexes"/>
</dbReference>
<dbReference type="SignaLink" id="Q94545"/>
<dbReference type="BioGRID-ORCS" id="42936">
    <property type="hits" value="1 hit in 1 CRISPR screen"/>
</dbReference>
<dbReference type="GenomeRNAi" id="42936"/>
<dbReference type="PRO" id="PR:Q94545"/>
<dbReference type="Proteomes" id="UP000000803">
    <property type="component" value="Chromosome 3R"/>
</dbReference>
<dbReference type="Bgee" id="FBgn0000139">
    <property type="expression patterns" value="Expressed in adult enteroendocrine precursor cell in adult midgut (Drosophila) and 139 other cell types or tissues"/>
</dbReference>
<dbReference type="ExpressionAtlas" id="Q94545">
    <property type="expression patterns" value="baseline and differential"/>
</dbReference>
<dbReference type="GO" id="GO:0044665">
    <property type="term" value="C:MLL1/2 complex"/>
    <property type="evidence" value="ECO:0000314"/>
    <property type="project" value="FlyBase"/>
</dbReference>
<dbReference type="GO" id="GO:0044666">
    <property type="term" value="C:MLL3/4 complex"/>
    <property type="evidence" value="ECO:0000314"/>
    <property type="project" value="FlyBase"/>
</dbReference>
<dbReference type="GO" id="GO:0005634">
    <property type="term" value="C:nucleus"/>
    <property type="evidence" value="ECO:0000314"/>
    <property type="project" value="FlyBase"/>
</dbReference>
<dbReference type="GO" id="GO:0005700">
    <property type="term" value="C:polytene chromosome"/>
    <property type="evidence" value="ECO:0000314"/>
    <property type="project" value="UniProtKB"/>
</dbReference>
<dbReference type="GO" id="GO:0005703">
    <property type="term" value="C:polytene chromosome puff"/>
    <property type="evidence" value="ECO:0000314"/>
    <property type="project" value="UniProtKB"/>
</dbReference>
<dbReference type="GO" id="GO:0048188">
    <property type="term" value="C:Set1C/COMPASS complex"/>
    <property type="evidence" value="ECO:0000314"/>
    <property type="project" value="FlyBase"/>
</dbReference>
<dbReference type="GO" id="GO:0003677">
    <property type="term" value="F:DNA binding"/>
    <property type="evidence" value="ECO:0000314"/>
    <property type="project" value="UniProtKB"/>
</dbReference>
<dbReference type="GO" id="GO:0019899">
    <property type="term" value="F:enzyme binding"/>
    <property type="evidence" value="ECO:0000353"/>
    <property type="project" value="UniProtKB"/>
</dbReference>
<dbReference type="GO" id="GO:0000976">
    <property type="term" value="F:transcription cis-regulatory region binding"/>
    <property type="evidence" value="ECO:0000318"/>
    <property type="project" value="GO_Central"/>
</dbReference>
<dbReference type="GO" id="GO:0003713">
    <property type="term" value="F:transcription coactivator activity"/>
    <property type="evidence" value="ECO:0000315"/>
    <property type="project" value="UniProtKB"/>
</dbReference>
<dbReference type="GO" id="GO:0008270">
    <property type="term" value="F:zinc ion binding"/>
    <property type="evidence" value="ECO:0007669"/>
    <property type="project" value="UniProtKB-KW"/>
</dbReference>
<dbReference type="GO" id="GO:0007420">
    <property type="term" value="P:brain development"/>
    <property type="evidence" value="ECO:0000304"/>
    <property type="project" value="UniProtKB"/>
</dbReference>
<dbReference type="GO" id="GO:0006338">
    <property type="term" value="P:chromatin remodeling"/>
    <property type="evidence" value="ECO:0000315"/>
    <property type="project" value="FlyBase"/>
</dbReference>
<dbReference type="GO" id="GO:0048813">
    <property type="term" value="P:dendrite morphogenesis"/>
    <property type="evidence" value="ECO:0000315"/>
    <property type="project" value="FlyBase"/>
</dbReference>
<dbReference type="GO" id="GO:0007444">
    <property type="term" value="P:imaginal disc development"/>
    <property type="evidence" value="ECO:0000304"/>
    <property type="project" value="UniProtKB"/>
</dbReference>
<dbReference type="GO" id="GO:0007476">
    <property type="term" value="P:imaginal disc-derived wing morphogenesis"/>
    <property type="evidence" value="ECO:0000315"/>
    <property type="project" value="FlyBase"/>
</dbReference>
<dbReference type="GO" id="GO:0007474">
    <property type="term" value="P:imaginal disc-derived wing vein specification"/>
    <property type="evidence" value="ECO:0000315"/>
    <property type="project" value="FlyBase"/>
</dbReference>
<dbReference type="GO" id="GO:0002168">
    <property type="term" value="P:instar larval development"/>
    <property type="evidence" value="ECO:0000315"/>
    <property type="project" value="UniProtKB"/>
</dbReference>
<dbReference type="GO" id="GO:0010629">
    <property type="term" value="P:negative regulation of gene expression"/>
    <property type="evidence" value="ECO:0000315"/>
    <property type="project" value="UniProtKB"/>
</dbReference>
<dbReference type="GO" id="GO:0010628">
    <property type="term" value="P:positive regulation of gene expression"/>
    <property type="evidence" value="ECO:0000315"/>
    <property type="project" value="UniProtKB"/>
</dbReference>
<dbReference type="GO" id="GO:0045944">
    <property type="term" value="P:positive regulation of transcription by RNA polymerase II"/>
    <property type="evidence" value="ECO:0000315"/>
    <property type="project" value="UniProtKB"/>
</dbReference>
<dbReference type="GO" id="GO:0035209">
    <property type="term" value="P:pupal development"/>
    <property type="evidence" value="ECO:0000315"/>
    <property type="project" value="UniProtKB"/>
</dbReference>
<dbReference type="GO" id="GO:0006357">
    <property type="term" value="P:regulation of transcription by RNA polymerase II"/>
    <property type="evidence" value="ECO:0000315"/>
    <property type="project" value="UniProtKB"/>
</dbReference>
<dbReference type="GO" id="GO:0035075">
    <property type="term" value="P:response to ecdysone"/>
    <property type="evidence" value="ECO:0000314"/>
    <property type="project" value="UniProtKB"/>
</dbReference>
<dbReference type="GO" id="GO:0045815">
    <property type="term" value="P:transcription initiation-coupled chromatin remodeling"/>
    <property type="evidence" value="ECO:0000315"/>
    <property type="project" value="FlyBase"/>
</dbReference>
<dbReference type="CDD" id="cd15583">
    <property type="entry name" value="PHD_ash2p_like"/>
    <property type="match status" value="1"/>
</dbReference>
<dbReference type="CDD" id="cd12872">
    <property type="entry name" value="SPRY_Ash2"/>
    <property type="match status" value="1"/>
</dbReference>
<dbReference type="FunFam" id="3.90.980.20:FF:000005">
    <property type="entry name" value="Set1/Ash2 histone methyltransferase complex subunit ASH2"/>
    <property type="match status" value="1"/>
</dbReference>
<dbReference type="Gene3D" id="2.60.120.920">
    <property type="match status" value="1"/>
</dbReference>
<dbReference type="Gene3D" id="3.90.980.20">
    <property type="match status" value="1"/>
</dbReference>
<dbReference type="InterPro" id="IPR037353">
    <property type="entry name" value="ASH2"/>
</dbReference>
<dbReference type="InterPro" id="IPR049455">
    <property type="entry name" value="ASH2-like_PHD"/>
</dbReference>
<dbReference type="InterPro" id="IPR053835">
    <property type="entry name" value="ASH2L-like_WH"/>
</dbReference>
<dbReference type="InterPro" id="IPR001870">
    <property type="entry name" value="B30.2/SPRY"/>
</dbReference>
<dbReference type="InterPro" id="IPR043136">
    <property type="entry name" value="B30.2/SPRY_sf"/>
</dbReference>
<dbReference type="InterPro" id="IPR013320">
    <property type="entry name" value="ConA-like_dom_sf"/>
</dbReference>
<dbReference type="InterPro" id="IPR003877">
    <property type="entry name" value="SPRY_dom"/>
</dbReference>
<dbReference type="InterPro" id="IPR019786">
    <property type="entry name" value="Zinc_finger_PHD-type_CS"/>
</dbReference>
<dbReference type="InterPro" id="IPR011011">
    <property type="entry name" value="Znf_FYVE_PHD"/>
</dbReference>
<dbReference type="InterPro" id="IPR001965">
    <property type="entry name" value="Znf_PHD"/>
</dbReference>
<dbReference type="PANTHER" id="PTHR10598">
    <property type="entry name" value="SET1/ASH2 HISTONE METHYLTRANSFERASE COMPLEX SUBUNIT ASH2"/>
    <property type="match status" value="1"/>
</dbReference>
<dbReference type="PANTHER" id="PTHR10598:SF0">
    <property type="entry name" value="SET1_ASH2 HISTONE METHYLTRANSFERASE COMPLEX SUBUNIT ASH2"/>
    <property type="match status" value="1"/>
</dbReference>
<dbReference type="Pfam" id="PF21198">
    <property type="entry name" value="ASH2L-like_WH"/>
    <property type="match status" value="1"/>
</dbReference>
<dbReference type="Pfam" id="PF21257">
    <property type="entry name" value="PHD_ash2p_like"/>
    <property type="match status" value="1"/>
</dbReference>
<dbReference type="Pfam" id="PF00622">
    <property type="entry name" value="SPRY"/>
    <property type="match status" value="2"/>
</dbReference>
<dbReference type="SMART" id="SM00249">
    <property type="entry name" value="PHD"/>
    <property type="match status" value="1"/>
</dbReference>
<dbReference type="SMART" id="SM00449">
    <property type="entry name" value="SPRY"/>
    <property type="match status" value="1"/>
</dbReference>
<dbReference type="SUPFAM" id="SSF49899">
    <property type="entry name" value="Concanavalin A-like lectins/glucanases"/>
    <property type="match status" value="1"/>
</dbReference>
<dbReference type="SUPFAM" id="SSF57903">
    <property type="entry name" value="FYVE/PHD zinc finger"/>
    <property type="match status" value="1"/>
</dbReference>
<dbReference type="PROSITE" id="PS50188">
    <property type="entry name" value="B302_SPRY"/>
    <property type="match status" value="1"/>
</dbReference>
<dbReference type="PROSITE" id="PS01359">
    <property type="entry name" value="ZF_PHD_1"/>
    <property type="match status" value="1"/>
</dbReference>
<sequence>MEDSQMDTSSPTESSSEVNFTAEEDKSQETRSAAGVCYCGKERNLNIVELLCATCSRWVHETCVSYQLGKGKLLPFITNYVFVCKNCSASGLESFRKSQATISQMCHCAIANMQQAASRDGRRQIQFSKDKEIIPYIEQYWEAMTTMPRRLTQSWYSTVQRSLVKDVQTLFTYEEHAEHGAMYGLFHQDLRIIKPNYESMSKSGALRLTDDGYTQASLSKNNRQKRKFPGTDSGPTGKKGRPSSDITANVKLPPHGYPLEHPFNKDGYRYILAEPDPHAPFRQEFDESSDWAGKPIPGWLYRILVPHSVLLALHDRAPQLKISEDRLAVTGERGYCMVRATHSVNRGCWYFEVTIEEMPDGAATRLGWGREYGNLQAPLGYDKFGYSWRSRKGTKFTESHGKHYSDAYVEGDTLGFLIELPEEASLDYLPNTFKDRPLVKFKSHLYYEDKDKITETLKNLHILQGSRIEFFKNGQSQGVAFEDIYAGSYFPAISIHKSATVSVNFGPAFKYPEVLVEHKAKGMHDRVEELITEQCLADTLYLTEHDGRLRLDNMGL</sequence>
<reference evidence="18 19" key="1">
    <citation type="journal article" date="1996" name="Genetics">
        <title>Molecular genetic analysis of Drosophila ash2, a member of the trithorax group required for imaginal disc pattern formation.</title>
        <authorList>
            <person name="Adamson A.L."/>
            <person name="Shearn A."/>
        </authorList>
    </citation>
    <scope>NUCLEOTIDE SEQUENCE [MRNA] (ISOFORM C)</scope>
    <scope>SUBCELLULAR LOCATION</scope>
    <scope>TISSUE SPECIFICITY</scope>
    <scope>DEVELOPMENTAL STAGE</scope>
    <scope>DISRUPTION PHENOTYPE</scope>
</reference>
<reference evidence="21" key="2">
    <citation type="journal article" date="2000" name="Science">
        <title>The genome sequence of Drosophila melanogaster.</title>
        <authorList>
            <person name="Adams M.D."/>
            <person name="Celniker S.E."/>
            <person name="Holt R.A."/>
            <person name="Evans C.A."/>
            <person name="Gocayne J.D."/>
            <person name="Amanatides P.G."/>
            <person name="Scherer S.E."/>
            <person name="Li P.W."/>
            <person name="Hoskins R.A."/>
            <person name="Galle R.F."/>
            <person name="George R.A."/>
            <person name="Lewis S.E."/>
            <person name="Richards S."/>
            <person name="Ashburner M."/>
            <person name="Henderson S.N."/>
            <person name="Sutton G.G."/>
            <person name="Wortman J.R."/>
            <person name="Yandell M.D."/>
            <person name="Zhang Q."/>
            <person name="Chen L.X."/>
            <person name="Brandon R.C."/>
            <person name="Rogers Y.-H.C."/>
            <person name="Blazej R.G."/>
            <person name="Champe M."/>
            <person name="Pfeiffer B.D."/>
            <person name="Wan K.H."/>
            <person name="Doyle C."/>
            <person name="Baxter E.G."/>
            <person name="Helt G."/>
            <person name="Nelson C.R."/>
            <person name="Miklos G.L.G."/>
            <person name="Abril J.F."/>
            <person name="Agbayani A."/>
            <person name="An H.-J."/>
            <person name="Andrews-Pfannkoch C."/>
            <person name="Baldwin D."/>
            <person name="Ballew R.M."/>
            <person name="Basu A."/>
            <person name="Baxendale J."/>
            <person name="Bayraktaroglu L."/>
            <person name="Beasley E.M."/>
            <person name="Beeson K.Y."/>
            <person name="Benos P.V."/>
            <person name="Berman B.P."/>
            <person name="Bhandari D."/>
            <person name="Bolshakov S."/>
            <person name="Borkova D."/>
            <person name="Botchan M.R."/>
            <person name="Bouck J."/>
            <person name="Brokstein P."/>
            <person name="Brottier P."/>
            <person name="Burtis K.C."/>
            <person name="Busam D.A."/>
            <person name="Butler H."/>
            <person name="Cadieu E."/>
            <person name="Center A."/>
            <person name="Chandra I."/>
            <person name="Cherry J.M."/>
            <person name="Cawley S."/>
            <person name="Dahlke C."/>
            <person name="Davenport L.B."/>
            <person name="Davies P."/>
            <person name="de Pablos B."/>
            <person name="Delcher A."/>
            <person name="Deng Z."/>
            <person name="Mays A.D."/>
            <person name="Dew I."/>
            <person name="Dietz S.M."/>
            <person name="Dodson K."/>
            <person name="Doup L.E."/>
            <person name="Downes M."/>
            <person name="Dugan-Rocha S."/>
            <person name="Dunkov B.C."/>
            <person name="Dunn P."/>
            <person name="Durbin K.J."/>
            <person name="Evangelista C.C."/>
            <person name="Ferraz C."/>
            <person name="Ferriera S."/>
            <person name="Fleischmann W."/>
            <person name="Fosler C."/>
            <person name="Gabrielian A.E."/>
            <person name="Garg N.S."/>
            <person name="Gelbart W.M."/>
            <person name="Glasser K."/>
            <person name="Glodek A."/>
            <person name="Gong F."/>
            <person name="Gorrell J.H."/>
            <person name="Gu Z."/>
            <person name="Guan P."/>
            <person name="Harris M."/>
            <person name="Harris N.L."/>
            <person name="Harvey D.A."/>
            <person name="Heiman T.J."/>
            <person name="Hernandez J.R."/>
            <person name="Houck J."/>
            <person name="Hostin D."/>
            <person name="Houston K.A."/>
            <person name="Howland T.J."/>
            <person name="Wei M.-H."/>
            <person name="Ibegwam C."/>
            <person name="Jalali M."/>
            <person name="Kalush F."/>
            <person name="Karpen G.H."/>
            <person name="Ke Z."/>
            <person name="Kennison J.A."/>
            <person name="Ketchum K.A."/>
            <person name="Kimmel B.E."/>
            <person name="Kodira C.D."/>
            <person name="Kraft C.L."/>
            <person name="Kravitz S."/>
            <person name="Kulp D."/>
            <person name="Lai Z."/>
            <person name="Lasko P."/>
            <person name="Lei Y."/>
            <person name="Levitsky A.A."/>
            <person name="Li J.H."/>
            <person name="Li Z."/>
            <person name="Liang Y."/>
            <person name="Lin X."/>
            <person name="Liu X."/>
            <person name="Mattei B."/>
            <person name="McIntosh T.C."/>
            <person name="McLeod M.P."/>
            <person name="McPherson D."/>
            <person name="Merkulov G."/>
            <person name="Milshina N.V."/>
            <person name="Mobarry C."/>
            <person name="Morris J."/>
            <person name="Moshrefi A."/>
            <person name="Mount S.M."/>
            <person name="Moy M."/>
            <person name="Murphy B."/>
            <person name="Murphy L."/>
            <person name="Muzny D.M."/>
            <person name="Nelson D.L."/>
            <person name="Nelson D.R."/>
            <person name="Nelson K.A."/>
            <person name="Nixon K."/>
            <person name="Nusskern D.R."/>
            <person name="Pacleb J.M."/>
            <person name="Palazzolo M."/>
            <person name="Pittman G.S."/>
            <person name="Pan S."/>
            <person name="Pollard J."/>
            <person name="Puri V."/>
            <person name="Reese M.G."/>
            <person name="Reinert K."/>
            <person name="Remington K."/>
            <person name="Saunders R.D.C."/>
            <person name="Scheeler F."/>
            <person name="Shen H."/>
            <person name="Shue B.C."/>
            <person name="Siden-Kiamos I."/>
            <person name="Simpson M."/>
            <person name="Skupski M.P."/>
            <person name="Smith T.J."/>
            <person name="Spier E."/>
            <person name="Spradling A.C."/>
            <person name="Stapleton M."/>
            <person name="Strong R."/>
            <person name="Sun E."/>
            <person name="Svirskas R."/>
            <person name="Tector C."/>
            <person name="Turner R."/>
            <person name="Venter E."/>
            <person name="Wang A.H."/>
            <person name="Wang X."/>
            <person name="Wang Z.-Y."/>
            <person name="Wassarman D.A."/>
            <person name="Weinstock G.M."/>
            <person name="Weissenbach J."/>
            <person name="Williams S.M."/>
            <person name="Woodage T."/>
            <person name="Worley K.C."/>
            <person name="Wu D."/>
            <person name="Yang S."/>
            <person name="Yao Q.A."/>
            <person name="Ye J."/>
            <person name="Yeh R.-F."/>
            <person name="Zaveri J.S."/>
            <person name="Zhan M."/>
            <person name="Zhang G."/>
            <person name="Zhao Q."/>
            <person name="Zheng L."/>
            <person name="Zheng X.H."/>
            <person name="Zhong F.N."/>
            <person name="Zhong W."/>
            <person name="Zhou X."/>
            <person name="Zhu S.C."/>
            <person name="Zhu X."/>
            <person name="Smith H.O."/>
            <person name="Gibbs R.A."/>
            <person name="Myers E.W."/>
            <person name="Rubin G.M."/>
            <person name="Venter J.C."/>
        </authorList>
    </citation>
    <scope>NUCLEOTIDE SEQUENCE [LARGE SCALE GENOMIC DNA]</scope>
    <source>
        <strain>Berkeley</strain>
    </source>
</reference>
<reference evidence="21" key="3">
    <citation type="journal article" date="2002" name="Genome Biol.">
        <title>Annotation of the Drosophila melanogaster euchromatic genome: a systematic review.</title>
        <authorList>
            <person name="Misra S."/>
            <person name="Crosby M.A."/>
            <person name="Mungall C.J."/>
            <person name="Matthews B.B."/>
            <person name="Campbell K.S."/>
            <person name="Hradecky P."/>
            <person name="Huang Y."/>
            <person name="Kaminker J.S."/>
            <person name="Millburn G.H."/>
            <person name="Prochnik S.E."/>
            <person name="Smith C.D."/>
            <person name="Tupy J.L."/>
            <person name="Whitfield E.J."/>
            <person name="Bayraktaroglu L."/>
            <person name="Berman B.P."/>
            <person name="Bettencourt B.R."/>
            <person name="Celniker S.E."/>
            <person name="de Grey A.D.N.J."/>
            <person name="Drysdale R.A."/>
            <person name="Harris N.L."/>
            <person name="Richter J."/>
            <person name="Russo S."/>
            <person name="Schroeder A.J."/>
            <person name="Shu S.Q."/>
            <person name="Stapleton M."/>
            <person name="Yamada C."/>
            <person name="Ashburner M."/>
            <person name="Gelbart W.M."/>
            <person name="Rubin G.M."/>
            <person name="Lewis S.E."/>
        </authorList>
    </citation>
    <scope>GENOME REANNOTATION</scope>
    <source>
        <strain>Berkeley</strain>
    </source>
</reference>
<reference evidence="18 20" key="4">
    <citation type="journal article" date="2002" name="Genome Biol.">
        <title>A Drosophila full-length cDNA resource.</title>
        <authorList>
            <person name="Stapleton M."/>
            <person name="Carlson J.W."/>
            <person name="Brokstein P."/>
            <person name="Yu C."/>
            <person name="Champe M."/>
            <person name="George R.A."/>
            <person name="Guarin H."/>
            <person name="Kronmiller B."/>
            <person name="Pacleb J.M."/>
            <person name="Park S."/>
            <person name="Wan K.H."/>
            <person name="Rubin G.M."/>
            <person name="Celniker S.E."/>
        </authorList>
    </citation>
    <scope>NUCLEOTIDE SEQUENCE [LARGE SCALE MRNA] (ISOFORM C)</scope>
    <source>
        <strain evidence="5">Berkeley</strain>
        <tissue evidence="5">Embryo</tissue>
    </source>
</reference>
<reference evidence="18 22" key="5">
    <citation type="submission" date="2010-01" db="EMBL/GenBank/DDBJ databases">
        <authorList>
            <person name="Stapleton M."/>
            <person name="Booth B."/>
            <person name="Carlson J."/>
            <person name="Chavez C."/>
            <person name="Frise E."/>
            <person name="George R."/>
            <person name="Pacleb J."/>
            <person name="Park S."/>
            <person name="Wan K."/>
            <person name="Yu C."/>
            <person name="Rubin G.M."/>
            <person name="Celniker S."/>
        </authorList>
    </citation>
    <scope>NUCLEOTIDE SEQUENCE [LARGE SCALE MRNA] (ISOFORM B)</scope>
    <scope>NUCLEOTIDE SEQUENCE [LARGE SCALE MRNA] OF 217-556 (ISOFORM C)</scope>
    <source>
        <strain>Berkeley</strain>
        <tissue>Embryo</tissue>
    </source>
</reference>
<reference evidence="18" key="6">
    <citation type="journal article" date="1995" name="Mech. Dev.">
        <title>Trans-regulation of thoracic homeotic selector genes of the Antennapedia and bithorax complexes by the trithorax group genes: absent, small, and homeotic discs 1 and 2.</title>
        <authorList>
            <person name="LaJeunesse D."/>
            <person name="Shearn A."/>
        </authorList>
    </citation>
    <scope>FUNCTION</scope>
    <scope>DISRUPTION PHENOTYPE</scope>
</reference>
<reference evidence="18" key="7">
    <citation type="journal article" date="2002" name="Int. J. Dev. Biol.">
        <title>The ash2 gene is involved in Drosophila wing development.</title>
        <authorList>
            <person name="Amoros M."/>
            <person name="Corominas M."/>
            <person name="Deak P."/>
            <person name="Serras F."/>
        </authorList>
    </citation>
    <scope>FUNCTION</scope>
    <scope>DISRUPTION PHENOTYPE</scope>
</reference>
<reference evidence="18" key="8">
    <citation type="journal article" date="2003" name="Proc. Natl. Acad. Sci. U.S.A.">
        <title>Transcriptional network controlled by the trithorax-group gene ash2 in Drosophila melanogaster.</title>
        <authorList>
            <person name="Beltran S."/>
            <person name="Blanco E."/>
            <person name="Serras F."/>
            <person name="Perez-Villamil B."/>
            <person name="Guigo R."/>
            <person name="Artavanis-Tsakonas S."/>
            <person name="Corominas M."/>
        </authorList>
    </citation>
    <scope>FUNCTION</scope>
    <scope>DEVELOPMENTAL STAGE</scope>
</reference>
<reference key="9">
    <citation type="journal article" date="2012" name="Proc. Natl. Acad. Sci. U.S.A.">
        <authorList>
            <person name="Beltran S."/>
            <person name="Blanco E."/>
            <person name="Serras F."/>
            <person name="Perez-Villamil B."/>
            <person name="Guigo R."/>
            <person name="Artavanis-Tsakonas S."/>
            <person name="Corominas M."/>
        </authorList>
    </citation>
    <scope>ERRATUM OF PUBMED:12626737</scope>
</reference>
<reference evidence="18" key="10">
    <citation type="journal article" date="2004" name="Development">
        <title>Activation and repression activities of ash2 in Drosophila wing imaginal discs.</title>
        <authorList>
            <person name="Angulo M."/>
            <person name="Corominas M."/>
            <person name="Serras F."/>
        </authorList>
    </citation>
    <scope>FUNCTION</scope>
    <scope>DISRUPTION PHENOTYPE</scope>
</reference>
<reference evidence="18" key="11">
    <citation type="journal article" date="2004" name="Genetics">
        <title>The direct interaction between ASH2, a Drosophila trithorax group protein, and SKTL, a nuclear phosphatidylinositol 4-phosphate 5-kinase, implies a role for phosphatidylinositol 4,5-bisphosphate in maintaining transcriptionally active chromatin.</title>
        <authorList>
            <person name="Cheng M.K."/>
            <person name="Shearn A."/>
        </authorList>
    </citation>
    <scope>FUNCTION</scope>
    <scope>INTERACTION WITH SKTL</scope>
    <scope>DISRUPTION PHENOTYPE</scope>
</reference>
<reference evidence="18" key="12">
    <citation type="journal article" date="2007" name="Genome Biol.">
        <title>Functional dissection of the ash2 and ash1 transcriptomes provides insights into the transcriptional basis of wing phenotypes and reveals conserved protein interactions.</title>
        <authorList>
            <person name="Beltran S."/>
            <person name="Angulo M."/>
            <person name="Pignatelli M."/>
            <person name="Serras F."/>
            <person name="Corominas M."/>
        </authorList>
    </citation>
    <scope>FUNCTION</scope>
    <scope>INTERACTION WITH HCF</scope>
    <scope>SUBCELLULAR LOCATION</scope>
    <scope>DISRUPTION PHENOTYPE</scope>
</reference>
<reference evidence="18" key="13">
    <citation type="journal article" date="2011" name="EMBO J.">
        <title>Drosophila Set1 is the major histone H3 lysine 4 trimethyltransferase with role in transcription.</title>
        <authorList>
            <person name="Ardehali M.B."/>
            <person name="Mei A."/>
            <person name="Zobeck K.L."/>
            <person name="Caron M."/>
            <person name="Lis J.T."/>
            <person name="Kusch T."/>
        </authorList>
    </citation>
    <scope>FUNCTION</scope>
    <scope>IDENTIFICATION IN THE SET1 COMPLEX</scope>
    <scope>SUBCELLULAR LOCATION</scope>
</reference>
<reference evidence="18" key="14">
    <citation type="journal article" date="2011" name="Mol. Cell. Biol.">
        <title>The COMPASS family of H3K4 methylases in Drosophila.</title>
        <authorList>
            <person name="Mohan M."/>
            <person name="Herz H.M."/>
            <person name="Smith E.R."/>
            <person name="Zhang Y."/>
            <person name="Jackson J."/>
            <person name="Washburn M.P."/>
            <person name="Florens L."/>
            <person name="Eissenberg J.C."/>
            <person name="Shilatifard A."/>
        </authorList>
    </citation>
    <scope>FUNCTION</scope>
    <scope>IDENTIFICATION IN THE SET1 AND MLL3/4 COMPLEXES</scope>
</reference>
<reference evidence="18" key="15">
    <citation type="journal article" date="2011" name="Nucleic Acids Res.">
        <title>Genome-wide chromatin occupancy analysis reveals a role for ASH2 in transcriptional pausing.</title>
        <authorList>
            <person name="Perez-Lluch S."/>
            <person name="Blanco E."/>
            <person name="Carbonell A."/>
            <person name="Raha D."/>
            <person name="Snyder M."/>
            <person name="Serras F."/>
            <person name="Corominas M."/>
        </authorList>
    </citation>
    <scope>FUNCTION</scope>
    <scope>DISRUPTION PHENOTYPE</scope>
</reference>
<reference evidence="18" key="16">
    <citation type="journal article" date="2013" name="Mol. Biol. Cell">
        <title>Ash2 acts as an ecdysone receptor coactivator by stabilizing the histone methyltransferase Trr.</title>
        <authorList>
            <person name="Carbonell A."/>
            <person name="Mazo A."/>
            <person name="Serras F."/>
            <person name="Corominas M."/>
        </authorList>
    </citation>
    <scope>FUNCTION</scope>
    <scope>INTERACTION WITH TRR</scope>
    <scope>SUBCELLULAR LOCATION</scope>
    <scope>DISRUPTION PHENOTYPE</scope>
</reference>
<feature type="chain" id="PRO_0000429418" description="Set1/Ash2 histone methyltransferase complex subunit ASH2">
    <location>
        <begin position="1"/>
        <end position="556"/>
    </location>
</feature>
<feature type="domain" description="B30.2/SPRY" evidence="2">
    <location>
        <begin position="288"/>
        <end position="510"/>
    </location>
</feature>
<feature type="zinc finger region" description="PHD-type" evidence="1">
    <location>
        <begin position="34"/>
        <end position="90"/>
    </location>
</feature>
<feature type="region of interest" description="Disordered" evidence="3">
    <location>
        <begin position="1"/>
        <end position="27"/>
    </location>
</feature>
<feature type="region of interest" description="Disordered" evidence="3">
    <location>
        <begin position="216"/>
        <end position="251"/>
    </location>
</feature>
<feature type="compositionally biased region" description="Polar residues" evidence="3">
    <location>
        <begin position="1"/>
        <end position="19"/>
    </location>
</feature>
<feature type="binding site" evidence="1">
    <location>
        <position position="37"/>
    </location>
    <ligand>
        <name>Zn(2+)</name>
        <dbReference type="ChEBI" id="CHEBI:29105"/>
        <label>1</label>
    </ligand>
</feature>
<feature type="binding site" evidence="1">
    <location>
        <position position="39"/>
    </location>
    <ligand>
        <name>Zn(2+)</name>
        <dbReference type="ChEBI" id="CHEBI:29105"/>
        <label>1</label>
    </ligand>
</feature>
<feature type="binding site" evidence="1">
    <location>
        <position position="52"/>
    </location>
    <ligand>
        <name>Zn(2+)</name>
        <dbReference type="ChEBI" id="CHEBI:29105"/>
        <label>2</label>
    </ligand>
</feature>
<feature type="binding site" evidence="1">
    <location>
        <position position="55"/>
    </location>
    <ligand>
        <name>Zn(2+)</name>
        <dbReference type="ChEBI" id="CHEBI:29105"/>
        <label>2</label>
    </ligand>
</feature>
<feature type="binding site" evidence="1">
    <location>
        <position position="60"/>
    </location>
    <ligand>
        <name>Zn(2+)</name>
        <dbReference type="ChEBI" id="CHEBI:29105"/>
        <label>1</label>
    </ligand>
</feature>
<feature type="binding site" evidence="1">
    <location>
        <position position="63"/>
    </location>
    <ligand>
        <name>Zn(2+)</name>
        <dbReference type="ChEBI" id="CHEBI:29105"/>
        <label>1</label>
    </ligand>
</feature>
<feature type="binding site" evidence="1">
    <location>
        <position position="84"/>
    </location>
    <ligand>
        <name>Zn(2+)</name>
        <dbReference type="ChEBI" id="CHEBI:29105"/>
        <label>2</label>
    </ligand>
</feature>
<feature type="binding site" evidence="1">
    <location>
        <position position="87"/>
    </location>
    <ligand>
        <name>Zn(2+)</name>
        <dbReference type="ChEBI" id="CHEBI:29105"/>
        <label>2</label>
    </ligand>
</feature>
<feature type="splice variant" id="VSP_054947" description="In isoform B." evidence="17">
    <location>
        <begin position="1"/>
        <end position="206"/>
    </location>
</feature>
<feature type="splice variant" id="VSP_054948" description="In isoform B." evidence="17">
    <original>RLTDDGYTQA</original>
    <variation>MASSFTDEES</variation>
    <location>
        <begin position="207"/>
        <end position="216"/>
    </location>
</feature>
<proteinExistence type="evidence at protein level"/>
<protein>
    <recommendedName>
        <fullName evidence="16">Set1/Ash2 histone methyltransferase complex subunit ASH2</fullName>
    </recommendedName>
    <alternativeName>
        <fullName evidence="21">Absent, small, or homeotic discs protein 2</fullName>
    </alternativeName>
</protein>
<keyword id="KW-0025">Alternative splicing</keyword>
<keyword id="KW-0158">Chromosome</keyword>
<keyword id="KW-0217">Developmental protein</keyword>
<keyword id="KW-0238">DNA-binding</keyword>
<keyword id="KW-0479">Metal-binding</keyword>
<keyword id="KW-0539">Nucleus</keyword>
<keyword id="KW-1185">Reference proteome</keyword>
<keyword id="KW-0804">Transcription</keyword>
<keyword id="KW-0805">Transcription regulation</keyword>
<keyword id="KW-0862">Zinc</keyword>
<keyword id="KW-0863">Zinc-finger</keyword>
<name>ASH2_DROME</name>
<organism>
    <name type="scientific">Drosophila melanogaster</name>
    <name type="common">Fruit fly</name>
    <dbReference type="NCBI Taxonomy" id="7227"/>
    <lineage>
        <taxon>Eukaryota</taxon>
        <taxon>Metazoa</taxon>
        <taxon>Ecdysozoa</taxon>
        <taxon>Arthropoda</taxon>
        <taxon>Hexapoda</taxon>
        <taxon>Insecta</taxon>
        <taxon>Pterygota</taxon>
        <taxon>Neoptera</taxon>
        <taxon>Endopterygota</taxon>
        <taxon>Diptera</taxon>
        <taxon>Brachycera</taxon>
        <taxon>Muscomorpha</taxon>
        <taxon>Ephydroidea</taxon>
        <taxon>Drosophilidae</taxon>
        <taxon>Drosophila</taxon>
        <taxon>Sophophora</taxon>
    </lineage>
</organism>
<accession>Q94545</accession>
<accession>D3DMU8</accession>
<accession>Q8IMW1</accession>
<accession>Q960W8</accession>
<comment type="function">
    <text evidence="4 6 7 8 9 10 11 12 13 14">Transcriptional regulator. Regulates a number of genes involved in wing development including activation of net and bs and repression of rho and kni and controls vein-intervein patterning during wing development. Required for correct expression of a number of homeotic genes including Scr in the first leg imaginal disk and Ubx in the third leg imaginal disk and haltere disks. Required for stabilization of the histone-lysine N-methyltransferase trr and for trimethylation of 'Lys-4' of histone H3. Together with sktl probably plays a role in maintenance of transcriptionally active chromatin through down-regulation of histone H1 hyperphosphorylation (PubMed:15280236).</text>
</comment>
<comment type="subunit">
    <text evidence="7 9 11 12 13">Core component of several methyltransferase-containing complexes. Component of the SET1C/COMPASS complex, composed at least of the catalytic subunit Set1, wds/WDR5, Wdr82, Rbbp5, ash2, Cfp1/CXXC1, hcf and Dpy-30L1 (PubMed:21694722, PubMed:21875999). Component of the MLL3/4 (Histone-lysine N-methyltransferase/demethylase TRR) complex composed at least of the catalytic subunit trr, ash2, Rbbp5, Dpy-30L1, wds, hcf, ptip, Pa1, Utx, Lpt and Ncoa6 (PubMed:21875999). Interacts with hcf (PubMed:17466076). Interacts with trr (PubMed:23197473).</text>
</comment>
<comment type="subunit">
    <molecule>Isoform B</molecule>
    <text evidence="7">Interacts (via B30.2/SPRY domain) with sktl; the interaction is direct.</text>
</comment>
<comment type="interaction">
    <interactant intactId="EBI-6991562">
        <id>Q94545</id>
    </interactant>
    <interactant intactId="EBI-163110">
        <id>Q9VPH8</id>
        <label>Rbbp5</label>
    </interactant>
    <organismsDiffer>false</organismsDiffer>
    <experiments>4</experiments>
</comment>
<comment type="subcellular location">
    <subcellularLocation>
        <location evidence="9 11 13 15">Nucleus</location>
    </subcellularLocation>
    <subcellularLocation>
        <location evidence="9 11 13 15">Chromosome</location>
    </subcellularLocation>
    <text evidence="9 11 13 15">Accumulates on salivary gland polytene chromosomes.</text>
</comment>
<comment type="alternative products">
    <event type="alternative splicing"/>
    <isoform>
        <id>Q94545-1</id>
        <name evidence="5">C</name>
        <sequence type="displayed"/>
    </isoform>
    <isoform>
        <id>Q94545-2</id>
        <name>B</name>
        <sequence type="described" ref="VSP_054947 VSP_054948"/>
    </isoform>
</comment>
<comment type="tissue specificity">
    <text evidence="15">In larvae and pupae, expressed in imaginal disks, salivary gland and fat body cells. No expression detected in central nervous system (at protein level).</text>
</comment>
<comment type="developmental stage">
    <text evidence="6 15">Expressed in larval and pupal stages (at protein level). Expression also detected at early embryonic stages and in adult.</text>
</comment>
<comment type="disruption phenotype">
    <text evidence="4 7 8 9 10 13 14 15">Generally pupal-lethal with mutants showing a wide array of homeotic transformations. Adult escapers are sterile and show pattern formation abnormalities in legs, including tissue overgrowth and small supernumerary legs. In wings, the pattern formation defects observed include duplicated bristles and sockets, transformation of campaniform sensilla (a class of sensory organ) to bristles, ectopic campaniform sensilla and reduction of intervein tissue with increase of longitudinal veins and cross-vein tissue. Mutant wing imaginal disk shows ectopic expression of neur, normally expressed in all sensory organ precursors in the posterior region of the wing disk. Increased histone H1 hyperphosphorylation in polytene chromosomes. Reduced trimethylation of histone H3 'Lys-4', reduced levels of trr protein and severe defects in pupariation and metamorphosis due to a lack of activation of ecdysone-responsive genes.</text>
</comment>
<comment type="sequence caution" evidence="18">
    <conflict type="miscellaneous discrepancy">
        <sequence resource="EMBL-CDS" id="ADC27634"/>
    </conflict>
    <text>Intron retention.</text>
</comment>
<gene>
    <name evidence="19 23" type="primary">ash2</name>
    <name type="ORF">CG6677</name>
</gene>